<protein>
    <recommendedName>
        <fullName evidence="1">NAD(P)H-quinone oxidoreductase subunit 4L, chloroplastic</fullName>
        <ecNumber evidence="1">7.1.1.-</ecNumber>
    </recommendedName>
    <alternativeName>
        <fullName evidence="1">NAD(P)H dehydrogenase subunit 4L</fullName>
    </alternativeName>
    <alternativeName>
        <fullName evidence="1">NADH-plastoquinone oxidoreductase subunit 4L</fullName>
    </alternativeName>
</protein>
<sequence>MILEHVLVLSAYLFLIGLYGLITSRNMVRALMCLELILNAVNMNFVTFSDFFDNSQLKGDIFCIFVIAIAAAEAAIGLAIVSSIYRNRKSTRINQSILLNK</sequence>
<gene>
    <name evidence="1" type="primary">ndhE</name>
</gene>
<feature type="chain" id="PRO_0000360305" description="NAD(P)H-quinone oxidoreductase subunit 4L, chloroplastic">
    <location>
        <begin position="1"/>
        <end position="101"/>
    </location>
</feature>
<feature type="transmembrane region" description="Helical" evidence="1">
    <location>
        <begin position="2"/>
        <end position="22"/>
    </location>
</feature>
<feature type="transmembrane region" description="Helical" evidence="1">
    <location>
        <begin position="32"/>
        <end position="52"/>
    </location>
</feature>
<feature type="transmembrane region" description="Helical" evidence="1">
    <location>
        <begin position="61"/>
        <end position="81"/>
    </location>
</feature>
<dbReference type="EC" id="7.1.1.-" evidence="1"/>
<dbReference type="EMBL" id="AP009369">
    <property type="protein sequence ID" value="BAF50077.1"/>
    <property type="molecule type" value="Genomic_DNA"/>
</dbReference>
<dbReference type="RefSeq" id="YP_001123252.1">
    <property type="nucleotide sequence ID" value="NC_009268.1"/>
</dbReference>
<dbReference type="SMR" id="A4QK72"/>
<dbReference type="GeneID" id="4962518"/>
<dbReference type="GO" id="GO:0009535">
    <property type="term" value="C:chloroplast thylakoid membrane"/>
    <property type="evidence" value="ECO:0007669"/>
    <property type="project" value="UniProtKB-SubCell"/>
</dbReference>
<dbReference type="GO" id="GO:0030964">
    <property type="term" value="C:NADH dehydrogenase complex"/>
    <property type="evidence" value="ECO:0007669"/>
    <property type="project" value="TreeGrafter"/>
</dbReference>
<dbReference type="GO" id="GO:0016655">
    <property type="term" value="F:oxidoreductase activity, acting on NAD(P)H, quinone or similar compound as acceptor"/>
    <property type="evidence" value="ECO:0007669"/>
    <property type="project" value="UniProtKB-UniRule"/>
</dbReference>
<dbReference type="GO" id="GO:0048038">
    <property type="term" value="F:quinone binding"/>
    <property type="evidence" value="ECO:0007669"/>
    <property type="project" value="UniProtKB-KW"/>
</dbReference>
<dbReference type="GO" id="GO:0042773">
    <property type="term" value="P:ATP synthesis coupled electron transport"/>
    <property type="evidence" value="ECO:0007669"/>
    <property type="project" value="InterPro"/>
</dbReference>
<dbReference type="GO" id="GO:0019684">
    <property type="term" value="P:photosynthesis, light reaction"/>
    <property type="evidence" value="ECO:0007669"/>
    <property type="project" value="UniProtKB-UniRule"/>
</dbReference>
<dbReference type="FunFam" id="1.10.287.3510:FF:000001">
    <property type="entry name" value="NADH-quinone oxidoreductase subunit K"/>
    <property type="match status" value="1"/>
</dbReference>
<dbReference type="Gene3D" id="1.10.287.3510">
    <property type="match status" value="1"/>
</dbReference>
<dbReference type="HAMAP" id="MF_01456">
    <property type="entry name" value="NDH1_NuoK"/>
    <property type="match status" value="1"/>
</dbReference>
<dbReference type="InterPro" id="IPR001133">
    <property type="entry name" value="NADH_UbQ_OxRdtase_chain4L/K"/>
</dbReference>
<dbReference type="InterPro" id="IPR039428">
    <property type="entry name" value="NUOK/Mnh_C1-like"/>
</dbReference>
<dbReference type="NCBIfam" id="NF004320">
    <property type="entry name" value="PRK05715.1-2"/>
    <property type="match status" value="1"/>
</dbReference>
<dbReference type="PANTHER" id="PTHR11434:SF16">
    <property type="entry name" value="NADH-UBIQUINONE OXIDOREDUCTASE CHAIN 4L"/>
    <property type="match status" value="1"/>
</dbReference>
<dbReference type="PANTHER" id="PTHR11434">
    <property type="entry name" value="NADH-UBIQUINONE OXIDOREDUCTASE SUBUNIT ND4L"/>
    <property type="match status" value="1"/>
</dbReference>
<dbReference type="Pfam" id="PF00420">
    <property type="entry name" value="Oxidored_q2"/>
    <property type="match status" value="1"/>
</dbReference>
<organism>
    <name type="scientific">Arabis hirsuta</name>
    <name type="common">Hairy rock-cress</name>
    <name type="synonym">Turritis hirsuta</name>
    <dbReference type="NCBI Taxonomy" id="78191"/>
    <lineage>
        <taxon>Eukaryota</taxon>
        <taxon>Viridiplantae</taxon>
        <taxon>Streptophyta</taxon>
        <taxon>Embryophyta</taxon>
        <taxon>Tracheophyta</taxon>
        <taxon>Spermatophyta</taxon>
        <taxon>Magnoliopsida</taxon>
        <taxon>eudicotyledons</taxon>
        <taxon>Gunneridae</taxon>
        <taxon>Pentapetalae</taxon>
        <taxon>rosids</taxon>
        <taxon>malvids</taxon>
        <taxon>Brassicales</taxon>
        <taxon>Brassicaceae</taxon>
        <taxon>Arabideae</taxon>
        <taxon>Arabis</taxon>
    </lineage>
</organism>
<accession>A4QK72</accession>
<comment type="function">
    <text evidence="1">NDH shuttles electrons from NAD(P)H:plastoquinone, via FMN and iron-sulfur (Fe-S) centers, to quinones in the photosynthetic chain and possibly in a chloroplast respiratory chain. The immediate electron acceptor for the enzyme in this species is believed to be plastoquinone. Couples the redox reaction to proton translocation, and thus conserves the redox energy in a proton gradient.</text>
</comment>
<comment type="catalytic activity">
    <reaction evidence="1">
        <text>a plastoquinone + NADH + (n+1) H(+)(in) = a plastoquinol + NAD(+) + n H(+)(out)</text>
        <dbReference type="Rhea" id="RHEA:42608"/>
        <dbReference type="Rhea" id="RHEA-COMP:9561"/>
        <dbReference type="Rhea" id="RHEA-COMP:9562"/>
        <dbReference type="ChEBI" id="CHEBI:15378"/>
        <dbReference type="ChEBI" id="CHEBI:17757"/>
        <dbReference type="ChEBI" id="CHEBI:57540"/>
        <dbReference type="ChEBI" id="CHEBI:57945"/>
        <dbReference type="ChEBI" id="CHEBI:62192"/>
    </reaction>
</comment>
<comment type="catalytic activity">
    <reaction evidence="1">
        <text>a plastoquinone + NADPH + (n+1) H(+)(in) = a plastoquinol + NADP(+) + n H(+)(out)</text>
        <dbReference type="Rhea" id="RHEA:42612"/>
        <dbReference type="Rhea" id="RHEA-COMP:9561"/>
        <dbReference type="Rhea" id="RHEA-COMP:9562"/>
        <dbReference type="ChEBI" id="CHEBI:15378"/>
        <dbReference type="ChEBI" id="CHEBI:17757"/>
        <dbReference type="ChEBI" id="CHEBI:57783"/>
        <dbReference type="ChEBI" id="CHEBI:58349"/>
        <dbReference type="ChEBI" id="CHEBI:62192"/>
    </reaction>
</comment>
<comment type="subunit">
    <text evidence="1">NDH is composed of at least 16 different subunits, 5 of which are encoded in the nucleus.</text>
</comment>
<comment type="subcellular location">
    <subcellularLocation>
        <location evidence="1">Plastid</location>
        <location evidence="1">Chloroplast thylakoid membrane</location>
        <topology evidence="1">Multi-pass membrane protein</topology>
    </subcellularLocation>
</comment>
<comment type="similarity">
    <text evidence="1">Belongs to the complex I subunit 4L family.</text>
</comment>
<evidence type="ECO:0000255" key="1">
    <source>
        <dbReference type="HAMAP-Rule" id="MF_01456"/>
    </source>
</evidence>
<geneLocation type="chloroplast"/>
<keyword id="KW-0150">Chloroplast</keyword>
<keyword id="KW-0472">Membrane</keyword>
<keyword id="KW-0520">NAD</keyword>
<keyword id="KW-0521">NADP</keyword>
<keyword id="KW-0934">Plastid</keyword>
<keyword id="KW-0618">Plastoquinone</keyword>
<keyword id="KW-0874">Quinone</keyword>
<keyword id="KW-0793">Thylakoid</keyword>
<keyword id="KW-1278">Translocase</keyword>
<keyword id="KW-0812">Transmembrane</keyword>
<keyword id="KW-1133">Transmembrane helix</keyword>
<keyword id="KW-0813">Transport</keyword>
<name>NU4LC_ARAHI</name>
<proteinExistence type="inferred from homology"/>
<reference key="1">
    <citation type="submission" date="2007-03" db="EMBL/GenBank/DDBJ databases">
        <title>Sequencing analysis of Arabis hirsuta chloroplast DNA.</title>
        <authorList>
            <person name="Hosouchi T."/>
            <person name="Tsuruoka H."/>
            <person name="Kotani H."/>
        </authorList>
    </citation>
    <scope>NUCLEOTIDE SEQUENCE [LARGE SCALE GENOMIC DNA]</scope>
</reference>